<protein>
    <recommendedName>
        <fullName evidence="1">Photosystem I assembly protein Ycf3</fullName>
    </recommendedName>
</protein>
<organism>
    <name type="scientific">Anthoceros angustus</name>
    <name type="common">Hornwort</name>
    <name type="synonym">Anthoceros formosae</name>
    <dbReference type="NCBI Taxonomy" id="48387"/>
    <lineage>
        <taxon>Eukaryota</taxon>
        <taxon>Viridiplantae</taxon>
        <taxon>Streptophyta</taxon>
        <taxon>Embryophyta</taxon>
        <taxon>Anthocerotophyta</taxon>
        <taxon>Anthocerotopsida</taxon>
        <taxon>Anthocerotidae</taxon>
        <taxon>Anthocerotales</taxon>
        <taxon>Anthocerotaceae</taxon>
        <taxon>Anthoceros</taxon>
    </lineage>
</organism>
<keyword id="KW-0150">Chloroplast</keyword>
<keyword id="KW-0472">Membrane</keyword>
<keyword id="KW-0602">Photosynthesis</keyword>
<keyword id="KW-0934">Plastid</keyword>
<keyword id="KW-0677">Repeat</keyword>
<keyword id="KW-0793">Thylakoid</keyword>
<keyword id="KW-0802">TPR repeat</keyword>
<dbReference type="EMBL" id="AB086179">
    <property type="protein sequence ID" value="BAC55350.1"/>
    <property type="molecule type" value="Genomic_DNA"/>
</dbReference>
<dbReference type="EMBL" id="AB087442">
    <property type="protein sequence ID" value="BAC55443.1"/>
    <property type="molecule type" value="mRNA"/>
</dbReference>
<dbReference type="RefSeq" id="NP_777414.1">
    <property type="nucleotide sequence ID" value="NC_004543.1"/>
</dbReference>
<dbReference type="SMR" id="Q85C36"/>
<dbReference type="GeneID" id="2553520"/>
<dbReference type="GO" id="GO:0009535">
    <property type="term" value="C:chloroplast thylakoid membrane"/>
    <property type="evidence" value="ECO:0007669"/>
    <property type="project" value="UniProtKB-SubCell"/>
</dbReference>
<dbReference type="GO" id="GO:0015979">
    <property type="term" value="P:photosynthesis"/>
    <property type="evidence" value="ECO:0007669"/>
    <property type="project" value="UniProtKB-UniRule"/>
</dbReference>
<dbReference type="FunFam" id="1.25.40.10:FF:000004">
    <property type="entry name" value="Photosystem I assembly protein Ycf3"/>
    <property type="match status" value="1"/>
</dbReference>
<dbReference type="Gene3D" id="1.25.40.10">
    <property type="entry name" value="Tetratricopeptide repeat domain"/>
    <property type="match status" value="1"/>
</dbReference>
<dbReference type="HAMAP" id="MF_00439">
    <property type="entry name" value="Ycf3"/>
    <property type="match status" value="1"/>
</dbReference>
<dbReference type="InterPro" id="IPR022818">
    <property type="entry name" value="PSI_Ycf3_assembly"/>
</dbReference>
<dbReference type="InterPro" id="IPR011990">
    <property type="entry name" value="TPR-like_helical_dom_sf"/>
</dbReference>
<dbReference type="InterPro" id="IPR019734">
    <property type="entry name" value="TPR_rpt"/>
</dbReference>
<dbReference type="NCBIfam" id="NF002725">
    <property type="entry name" value="PRK02603.1"/>
    <property type="match status" value="1"/>
</dbReference>
<dbReference type="Pfam" id="PF00515">
    <property type="entry name" value="TPR_1"/>
    <property type="match status" value="1"/>
</dbReference>
<dbReference type="SMART" id="SM00028">
    <property type="entry name" value="TPR"/>
    <property type="match status" value="3"/>
</dbReference>
<dbReference type="SUPFAM" id="SSF48452">
    <property type="entry name" value="TPR-like"/>
    <property type="match status" value="1"/>
</dbReference>
<dbReference type="PROSITE" id="PS50005">
    <property type="entry name" value="TPR"/>
    <property type="match status" value="3"/>
</dbReference>
<dbReference type="PROSITE" id="PS50293">
    <property type="entry name" value="TPR_REGION"/>
    <property type="match status" value="1"/>
</dbReference>
<feature type="chain" id="PRO_0000217791" description="Photosystem I assembly protein Ycf3">
    <location>
        <begin position="1"/>
        <end position="170"/>
    </location>
</feature>
<feature type="repeat" description="TPR 1">
    <location>
        <begin position="35"/>
        <end position="68"/>
    </location>
</feature>
<feature type="repeat" description="TPR 2">
    <location>
        <begin position="72"/>
        <end position="105"/>
    </location>
</feature>
<feature type="repeat" description="TPR 3">
    <location>
        <begin position="120"/>
        <end position="153"/>
    </location>
</feature>
<sequence length="170" mass="19742">MPRSQKNDNFIDKTFTIIADILLQIIPTTQREKEAFTHYRDGMSAQSEGEYAEALQNYYEAMRLEIDPYDRSYILYNIGLIHTSNGEHAKALEYYFQALERNSSLPQALNNMAVICHYRGEQAIEEGDPETCEVWFDQAADYWKKAISLAPSNYIEAQNWLRITGRSKIK</sequence>
<gene>
    <name evidence="1" type="primary">ycf3</name>
</gene>
<reference key="1">
    <citation type="journal article" date="2003" name="Nucleic Acids Res.">
        <title>The complete nucleotide sequence of the hornwort (Anthoceros formosae) chloroplast genome: insight into the earliest land plants.</title>
        <authorList>
            <person name="Kugita M."/>
            <person name="Kaneko A."/>
            <person name="Yamamoto Y."/>
            <person name="Takeya Y."/>
            <person name="Matsumoto T."/>
            <person name="Yoshinaga K."/>
        </authorList>
    </citation>
    <scope>NUCLEOTIDE SEQUENCE [LARGE SCALE GENOMIC DNA]</scope>
</reference>
<reference key="2">
    <citation type="journal article" date="2003" name="Nucleic Acids Res.">
        <title>RNA editing in hornwort chloroplasts makes more than half the genes functional.</title>
        <authorList>
            <person name="Kugita M."/>
            <person name="Yamamoto Y."/>
            <person name="Fujikawa T."/>
            <person name="Matsumoto T."/>
            <person name="Yoshinaga K."/>
        </authorList>
    </citation>
    <scope>NUCLEOTIDE SEQUENCE [MRNA]</scope>
    <scope>ABSENCE OF RNA EDITING</scope>
    <source>
        <tissue>Thallus</tissue>
    </source>
</reference>
<comment type="function">
    <text evidence="1">Essential for the assembly of the photosystem I (PSI) complex. May act as a chaperone-like factor to guide the assembly of the PSI subunits.</text>
</comment>
<comment type="subcellular location">
    <subcellularLocation>
        <location evidence="1">Plastid</location>
        <location evidence="1">Chloroplast thylakoid membrane</location>
        <topology evidence="1">Peripheral membrane protein</topology>
    </subcellularLocation>
</comment>
<comment type="similarity">
    <text evidence="1">Belongs to the Ycf3 family.</text>
</comment>
<name>YCF3_ANTAG</name>
<proteinExistence type="evidence at transcript level"/>
<geneLocation type="chloroplast"/>
<evidence type="ECO:0000255" key="1">
    <source>
        <dbReference type="HAMAP-Rule" id="MF_00439"/>
    </source>
</evidence>
<accession>Q85C36</accession>